<gene>
    <name type="primary">mglC</name>
    <name type="ordered locus">STM2188</name>
</gene>
<comment type="function">
    <text evidence="1 5">Part of the ABC transporter complex MglABC involved in galactose/methyl galactoside import. Probably responsible for the translocation of the substrate across the membrane.</text>
</comment>
<comment type="subunit">
    <text evidence="1">The complex is composed of one ATP-binding protein (MglA), two transmembrane proteins (MglC) and a solute-binding protein (MglB).</text>
</comment>
<comment type="subcellular location">
    <subcellularLocation>
        <location evidence="3">Cell inner membrane</location>
        <topology evidence="2">Multi-pass membrane protein</topology>
    </subcellularLocation>
</comment>
<comment type="similarity">
    <text evidence="4">Belongs to the binding-protein-dependent transport system permease family. AraH/RbsC subfamily.</text>
</comment>
<comment type="sequence caution" evidence="4">
    <conflict type="frameshift">
        <sequence resource="EMBL-CDS" id="AAC44150"/>
    </conflict>
</comment>
<proteinExistence type="evidence at protein level"/>
<evidence type="ECO:0000250" key="1">
    <source>
        <dbReference type="UniProtKB" id="P23200"/>
    </source>
</evidence>
<evidence type="ECO:0000255" key="2"/>
<evidence type="ECO:0000269" key="3">
    <source>
    </source>
</evidence>
<evidence type="ECO:0000305" key="4"/>
<evidence type="ECO:0000305" key="5">
    <source>
    </source>
</evidence>
<organism>
    <name type="scientific">Salmonella typhimurium (strain LT2 / SGSC1412 / ATCC 700720)</name>
    <dbReference type="NCBI Taxonomy" id="99287"/>
    <lineage>
        <taxon>Bacteria</taxon>
        <taxon>Pseudomonadati</taxon>
        <taxon>Pseudomonadota</taxon>
        <taxon>Gammaproteobacteria</taxon>
        <taxon>Enterobacterales</taxon>
        <taxon>Enterobacteriaceae</taxon>
        <taxon>Salmonella</taxon>
    </lineage>
</organism>
<keyword id="KW-0997">Cell inner membrane</keyword>
<keyword id="KW-1003">Cell membrane</keyword>
<keyword id="KW-0472">Membrane</keyword>
<keyword id="KW-1185">Reference proteome</keyword>
<keyword id="KW-0762">Sugar transport</keyword>
<keyword id="KW-0812">Transmembrane</keyword>
<keyword id="KW-1133">Transmembrane helix</keyword>
<keyword id="KW-0813">Transport</keyword>
<sequence length="336" mass="35607">MSALNKKSFLTWLKEGGIYVVLLVLLAIIIFQDPTFLSLLNLSNILTQSSVRIIIALGVAGLIVTQGTDLSAGRQVGLAAVVAATLLQSMENANKVFPEMATMPIALVILIVCAIGAVIGLVNGIIIAYLNVTPFITTLGTMIIVYGINSLYYDFVGASPISGFDSGFSTFAQGFVAMGSFRLSYITFYALIAVAFVWVLWNKTRFGKNIFAIGGNPEAAKVSGVNVALNLLMIYALSGVFYAFGGLLEAGRIGSATNNLGFMYELDAIAACVVGGVSFSGGVGTVFGVVTGVIIFTVINYGLTYIGVNPYWQYIIKGGIIIFAVALDSLKYARKK</sequence>
<protein>
    <recommendedName>
        <fullName evidence="4">Galactose/methyl galactoside import permease protein MglC</fullName>
    </recommendedName>
</protein>
<reference key="1">
    <citation type="journal article" date="1996" name="Gene">
        <title>Sequences of the Salmonella typhimurium mglA and mglC genes.</title>
        <authorList>
            <person name="Stamm L.V."/>
            <person name="Young N.R."/>
            <person name="Frye J.G."/>
        </authorList>
    </citation>
    <scope>NUCLEOTIDE SEQUENCE [GENOMIC DNA]</scope>
    <source>
        <strain>LT2</strain>
    </source>
</reference>
<reference key="2">
    <citation type="journal article" date="2001" name="Nature">
        <title>Complete genome sequence of Salmonella enterica serovar Typhimurium LT2.</title>
        <authorList>
            <person name="McClelland M."/>
            <person name="Sanderson K.E."/>
            <person name="Spieth J."/>
            <person name="Clifton S.W."/>
            <person name="Latreille P."/>
            <person name="Courtney L."/>
            <person name="Porwollik S."/>
            <person name="Ali J."/>
            <person name="Dante M."/>
            <person name="Du F."/>
            <person name="Hou S."/>
            <person name="Layman D."/>
            <person name="Leonard S."/>
            <person name="Nguyen C."/>
            <person name="Scott K."/>
            <person name="Holmes A."/>
            <person name="Grewal N."/>
            <person name="Mulvaney E."/>
            <person name="Ryan E."/>
            <person name="Sun H."/>
            <person name="Florea L."/>
            <person name="Miller W."/>
            <person name="Stoneking T."/>
            <person name="Nhan M."/>
            <person name="Waterston R."/>
            <person name="Wilson R.K."/>
        </authorList>
    </citation>
    <scope>NUCLEOTIDE SEQUENCE [LARGE SCALE GENOMIC DNA]</scope>
    <source>
        <strain>LT2 / SGSC1412 / ATCC 700720</strain>
    </source>
</reference>
<reference key="3">
    <citation type="journal article" date="1985" name="J. Bacteriol.">
        <title>Characterization of the Salmonella typhimurium mgl operon and its gene products.</title>
        <authorList>
            <person name="Mueller N."/>
            <person name="Heine H.-G."/>
            <person name="Boos W."/>
        </authorList>
    </citation>
    <scope>SUBCELLULAR LOCATION</scope>
    <scope>FUNCTION IN GALACTOSE TRANSPORT</scope>
</reference>
<name>MGLC_SALTY</name>
<dbReference type="EMBL" id="U40492">
    <property type="protein sequence ID" value="AAC44150.1"/>
    <property type="status" value="ALT_FRAME"/>
    <property type="molecule type" value="Genomic_DNA"/>
</dbReference>
<dbReference type="EMBL" id="AE006468">
    <property type="protein sequence ID" value="AAL21092.1"/>
    <property type="molecule type" value="Genomic_DNA"/>
</dbReference>
<dbReference type="RefSeq" id="NP_461133.1">
    <property type="nucleotide sequence ID" value="NC_003197.2"/>
</dbReference>
<dbReference type="RefSeq" id="WP_001275101.1">
    <property type="nucleotide sequence ID" value="NC_003197.2"/>
</dbReference>
<dbReference type="STRING" id="99287.STM2188"/>
<dbReference type="PaxDb" id="99287-STM2188"/>
<dbReference type="GeneID" id="1253710"/>
<dbReference type="KEGG" id="stm:STM2188"/>
<dbReference type="PATRIC" id="fig|99287.12.peg.2315"/>
<dbReference type="HOGENOM" id="CLU_028880_1_0_6"/>
<dbReference type="OMA" id="IWVGSRQ"/>
<dbReference type="PhylomeDB" id="Q56036"/>
<dbReference type="BioCyc" id="SENT99287:STM2188-MONOMER"/>
<dbReference type="Proteomes" id="UP000001014">
    <property type="component" value="Chromosome"/>
</dbReference>
<dbReference type="GO" id="GO:0005886">
    <property type="term" value="C:plasma membrane"/>
    <property type="evidence" value="ECO:0000318"/>
    <property type="project" value="GO_Central"/>
</dbReference>
<dbReference type="GO" id="GO:0022857">
    <property type="term" value="F:transmembrane transporter activity"/>
    <property type="evidence" value="ECO:0007669"/>
    <property type="project" value="InterPro"/>
</dbReference>
<dbReference type="CDD" id="cd06579">
    <property type="entry name" value="TM_PBP1_transp_AraH_like"/>
    <property type="match status" value="1"/>
</dbReference>
<dbReference type="InterPro" id="IPR001851">
    <property type="entry name" value="ABC_transp_permease"/>
</dbReference>
<dbReference type="NCBIfam" id="NF007014">
    <property type="entry name" value="PRK09478.1"/>
    <property type="match status" value="1"/>
</dbReference>
<dbReference type="PANTHER" id="PTHR32196">
    <property type="entry name" value="ABC TRANSPORTER PERMEASE PROTEIN YPHD-RELATED-RELATED"/>
    <property type="match status" value="1"/>
</dbReference>
<dbReference type="PANTHER" id="PTHR32196:SF18">
    <property type="entry name" value="GALACTOSE_METHYL GALACTOSIDE IMPORT PERMEASE PROTEIN MGLC"/>
    <property type="match status" value="1"/>
</dbReference>
<dbReference type="Pfam" id="PF02653">
    <property type="entry name" value="BPD_transp_2"/>
    <property type="match status" value="1"/>
</dbReference>
<feature type="chain" id="PRO_0000060107" description="Galactose/methyl galactoside import permease protein MglC">
    <location>
        <begin position="1"/>
        <end position="336"/>
    </location>
</feature>
<feature type="transmembrane region" description="Helical" evidence="2">
    <location>
        <begin position="17"/>
        <end position="37"/>
    </location>
</feature>
<feature type="transmembrane region" description="Helical" evidence="2">
    <location>
        <begin position="53"/>
        <end position="73"/>
    </location>
</feature>
<feature type="transmembrane region" description="Helical" evidence="2">
    <location>
        <begin position="107"/>
        <end position="127"/>
    </location>
</feature>
<feature type="transmembrane region" description="Helical" evidence="2">
    <location>
        <begin position="128"/>
        <end position="148"/>
    </location>
</feature>
<feature type="transmembrane region" description="Helical" evidence="2">
    <location>
        <begin position="181"/>
        <end position="201"/>
    </location>
</feature>
<feature type="transmembrane region" description="Helical" evidence="2">
    <location>
        <begin position="227"/>
        <end position="247"/>
    </location>
</feature>
<feature type="transmembrane region" description="Helical" evidence="2">
    <location>
        <begin position="257"/>
        <end position="277"/>
    </location>
</feature>
<feature type="transmembrane region" description="Helical" evidence="2">
    <location>
        <begin position="279"/>
        <end position="299"/>
    </location>
</feature>
<feature type="transmembrane region" description="Helical" evidence="2">
    <location>
        <begin position="306"/>
        <end position="326"/>
    </location>
</feature>
<accession>Q56036</accession>